<name>MB213_DANRE</name>
<dbReference type="EMBL" id="AL807829">
    <property type="protein sequence ID" value="CAQ13998.1"/>
    <property type="status" value="ALT_SEQ"/>
    <property type="molecule type" value="Genomic_DNA"/>
</dbReference>
<dbReference type="EMBL" id="BC153314">
    <property type="protein sequence ID" value="AAI53315.1"/>
    <property type="molecule type" value="mRNA"/>
</dbReference>
<dbReference type="RefSeq" id="NP_001103495.1">
    <property type="nucleotide sequence ID" value="NM_001110025.1"/>
</dbReference>
<dbReference type="SMR" id="A8E4S7"/>
<dbReference type="FunCoup" id="A8E4S7">
    <property type="interactions" value="931"/>
</dbReference>
<dbReference type="STRING" id="7955.ENSDARP00000122707"/>
<dbReference type="PaxDb" id="7955-ENSDARP00000122707"/>
<dbReference type="Ensembl" id="ENSDART00000181779">
    <property type="protein sequence ID" value="ENSDARP00000151133"/>
    <property type="gene ID" value="ENSDARG00000112160"/>
</dbReference>
<dbReference type="GeneID" id="558164"/>
<dbReference type="KEGG" id="dre:558164"/>
<dbReference type="AGR" id="ZFIN:ZDB-GENE-070912-242"/>
<dbReference type="CTD" id="126868"/>
<dbReference type="ZFIN" id="ZDB-GENE-070912-242">
    <property type="gene designation" value="mab21l3"/>
</dbReference>
<dbReference type="eggNOG" id="KOG3963">
    <property type="taxonomic scope" value="Eukaryota"/>
</dbReference>
<dbReference type="InParanoid" id="A8E4S7"/>
<dbReference type="OMA" id="WSKKARW"/>
<dbReference type="OrthoDB" id="5947963at2759"/>
<dbReference type="PhylomeDB" id="A8E4S7"/>
<dbReference type="TreeFam" id="TF315012"/>
<dbReference type="PRO" id="PR:A8E4S7"/>
<dbReference type="Proteomes" id="UP000000437">
    <property type="component" value="Alternate scaffold 9"/>
</dbReference>
<dbReference type="Proteomes" id="UP000000437">
    <property type="component" value="Chromosome 9"/>
</dbReference>
<dbReference type="Gene3D" id="1.10.1410.40">
    <property type="match status" value="1"/>
</dbReference>
<dbReference type="Gene3D" id="3.30.460.90">
    <property type="match status" value="1"/>
</dbReference>
<dbReference type="InterPro" id="IPR046903">
    <property type="entry name" value="Mab-21-like_nuc_Trfase"/>
</dbReference>
<dbReference type="InterPro" id="IPR046906">
    <property type="entry name" value="Mab-21_HhH/H2TH-like"/>
</dbReference>
<dbReference type="InterPro" id="IPR024810">
    <property type="entry name" value="MAB21L/cGLR"/>
</dbReference>
<dbReference type="PANTHER" id="PTHR10656">
    <property type="entry name" value="CELL FATE DETERMINING PROTEIN MAB21-RELATED"/>
    <property type="match status" value="1"/>
</dbReference>
<dbReference type="PANTHER" id="PTHR10656:SF30">
    <property type="entry name" value="PROTEIN MAB-21-LIKE 3"/>
    <property type="match status" value="1"/>
</dbReference>
<dbReference type="Pfam" id="PF03281">
    <property type="entry name" value="Mab-21"/>
    <property type="match status" value="1"/>
</dbReference>
<dbReference type="Pfam" id="PF20266">
    <property type="entry name" value="Mab-21_C"/>
    <property type="match status" value="1"/>
</dbReference>
<dbReference type="SMART" id="SM01265">
    <property type="entry name" value="Mab-21"/>
    <property type="match status" value="1"/>
</dbReference>
<evidence type="ECO:0000305" key="1"/>
<comment type="similarity">
    <text evidence="1">Belongs to the mab-21 family.</text>
</comment>
<comment type="sequence caution" evidence="1">
    <conflict type="erroneous gene model prediction">
        <sequence resource="EMBL-CDS" id="CAQ13998"/>
    </conflict>
</comment>
<proteinExistence type="evidence at transcript level"/>
<accession>A8E4S7</accession>
<accession>B0R067</accession>
<reference key="1">
    <citation type="journal article" date="2013" name="Nature">
        <title>The zebrafish reference genome sequence and its relationship to the human genome.</title>
        <authorList>
            <person name="Howe K."/>
            <person name="Clark M.D."/>
            <person name="Torroja C.F."/>
            <person name="Torrance J."/>
            <person name="Berthelot C."/>
            <person name="Muffato M."/>
            <person name="Collins J.E."/>
            <person name="Humphray S."/>
            <person name="McLaren K."/>
            <person name="Matthews L."/>
            <person name="McLaren S."/>
            <person name="Sealy I."/>
            <person name="Caccamo M."/>
            <person name="Churcher C."/>
            <person name="Scott C."/>
            <person name="Barrett J.C."/>
            <person name="Koch R."/>
            <person name="Rauch G.J."/>
            <person name="White S."/>
            <person name="Chow W."/>
            <person name="Kilian B."/>
            <person name="Quintais L.T."/>
            <person name="Guerra-Assuncao J.A."/>
            <person name="Zhou Y."/>
            <person name="Gu Y."/>
            <person name="Yen J."/>
            <person name="Vogel J.H."/>
            <person name="Eyre T."/>
            <person name="Redmond S."/>
            <person name="Banerjee R."/>
            <person name="Chi J."/>
            <person name="Fu B."/>
            <person name="Langley E."/>
            <person name="Maguire S.F."/>
            <person name="Laird G.K."/>
            <person name="Lloyd D."/>
            <person name="Kenyon E."/>
            <person name="Donaldson S."/>
            <person name="Sehra H."/>
            <person name="Almeida-King J."/>
            <person name="Loveland J."/>
            <person name="Trevanion S."/>
            <person name="Jones M."/>
            <person name="Quail M."/>
            <person name="Willey D."/>
            <person name="Hunt A."/>
            <person name="Burton J."/>
            <person name="Sims S."/>
            <person name="McLay K."/>
            <person name="Plumb B."/>
            <person name="Davis J."/>
            <person name="Clee C."/>
            <person name="Oliver K."/>
            <person name="Clark R."/>
            <person name="Riddle C."/>
            <person name="Elliot D."/>
            <person name="Threadgold G."/>
            <person name="Harden G."/>
            <person name="Ware D."/>
            <person name="Begum S."/>
            <person name="Mortimore B."/>
            <person name="Kerry G."/>
            <person name="Heath P."/>
            <person name="Phillimore B."/>
            <person name="Tracey A."/>
            <person name="Corby N."/>
            <person name="Dunn M."/>
            <person name="Johnson C."/>
            <person name="Wood J."/>
            <person name="Clark S."/>
            <person name="Pelan S."/>
            <person name="Griffiths G."/>
            <person name="Smith M."/>
            <person name="Glithero R."/>
            <person name="Howden P."/>
            <person name="Barker N."/>
            <person name="Lloyd C."/>
            <person name="Stevens C."/>
            <person name="Harley J."/>
            <person name="Holt K."/>
            <person name="Panagiotidis G."/>
            <person name="Lovell J."/>
            <person name="Beasley H."/>
            <person name="Henderson C."/>
            <person name="Gordon D."/>
            <person name="Auger K."/>
            <person name="Wright D."/>
            <person name="Collins J."/>
            <person name="Raisen C."/>
            <person name="Dyer L."/>
            <person name="Leung K."/>
            <person name="Robertson L."/>
            <person name="Ambridge K."/>
            <person name="Leongamornlert D."/>
            <person name="McGuire S."/>
            <person name="Gilderthorp R."/>
            <person name="Griffiths C."/>
            <person name="Manthravadi D."/>
            <person name="Nichol S."/>
            <person name="Barker G."/>
            <person name="Whitehead S."/>
            <person name="Kay M."/>
            <person name="Brown J."/>
            <person name="Murnane C."/>
            <person name="Gray E."/>
            <person name="Humphries M."/>
            <person name="Sycamore N."/>
            <person name="Barker D."/>
            <person name="Saunders D."/>
            <person name="Wallis J."/>
            <person name="Babbage A."/>
            <person name="Hammond S."/>
            <person name="Mashreghi-Mohammadi M."/>
            <person name="Barr L."/>
            <person name="Martin S."/>
            <person name="Wray P."/>
            <person name="Ellington A."/>
            <person name="Matthews N."/>
            <person name="Ellwood M."/>
            <person name="Woodmansey R."/>
            <person name="Clark G."/>
            <person name="Cooper J."/>
            <person name="Tromans A."/>
            <person name="Grafham D."/>
            <person name="Skuce C."/>
            <person name="Pandian R."/>
            <person name="Andrews R."/>
            <person name="Harrison E."/>
            <person name="Kimberley A."/>
            <person name="Garnett J."/>
            <person name="Fosker N."/>
            <person name="Hall R."/>
            <person name="Garner P."/>
            <person name="Kelly D."/>
            <person name="Bird C."/>
            <person name="Palmer S."/>
            <person name="Gehring I."/>
            <person name="Berger A."/>
            <person name="Dooley C.M."/>
            <person name="Ersan-Urun Z."/>
            <person name="Eser C."/>
            <person name="Geiger H."/>
            <person name="Geisler M."/>
            <person name="Karotki L."/>
            <person name="Kirn A."/>
            <person name="Konantz J."/>
            <person name="Konantz M."/>
            <person name="Oberlander M."/>
            <person name="Rudolph-Geiger S."/>
            <person name="Teucke M."/>
            <person name="Lanz C."/>
            <person name="Raddatz G."/>
            <person name="Osoegawa K."/>
            <person name="Zhu B."/>
            <person name="Rapp A."/>
            <person name="Widaa S."/>
            <person name="Langford C."/>
            <person name="Yang F."/>
            <person name="Schuster S.C."/>
            <person name="Carter N.P."/>
            <person name="Harrow J."/>
            <person name="Ning Z."/>
            <person name="Herrero J."/>
            <person name="Searle S.M."/>
            <person name="Enright A."/>
            <person name="Geisler R."/>
            <person name="Plasterk R.H."/>
            <person name="Lee C."/>
            <person name="Westerfield M."/>
            <person name="de Jong P.J."/>
            <person name="Zon L.I."/>
            <person name="Postlethwait J.H."/>
            <person name="Nusslein-Volhard C."/>
            <person name="Hubbard T.J."/>
            <person name="Roest Crollius H."/>
            <person name="Rogers J."/>
            <person name="Stemple D.L."/>
        </authorList>
    </citation>
    <scope>NUCLEOTIDE SEQUENCE [LARGE SCALE GENOMIC DNA]</scope>
    <source>
        <strain>Tuebingen</strain>
    </source>
</reference>
<reference key="2">
    <citation type="submission" date="2007-09" db="EMBL/GenBank/DDBJ databases">
        <authorList>
            <consortium name="NIH - Zebrafish Gene Collection (ZGC) project"/>
        </authorList>
    </citation>
    <scope>NUCLEOTIDE SEQUENCE [LARGE SCALE MRNA]</scope>
    <source>
        <tissue>Eye</tissue>
    </source>
</reference>
<sequence length="387" mass="45062">MTNCTDEDLDNYLLNQVDLRHRQVSKCVEDVQKIIKDLTTEVSSKDARFQSIANAGVHNASLKDQPALMSKWSALLRGRCAYNPAIQVLSPTLYLISVPLQGLMGYKERRTRQWRYYTLTGSRLLSPVREPEKLHQWLELESFVNPSQEWHDARMTIEGDIVPAKVVNVFKDLLETSIKTRGLTNKVSVLESVGTAVRVAVETSEAQIEVKLVPTVELMNYWPKRARWPRLFRRWPSTERARCIKSFGFNLMASSNYHWLLSFSRAEQVLLSNIDEDGGCRRKCYRVVRQLKEDGWCPGSKPVITAFHLQTLLFWTCEKYPCTRDWKDFRGCVLRLVQKLHKCVSQHYLRHYFIRSHNLLKYSNTNELDEVAKKINHFLENPGTYIH</sequence>
<keyword id="KW-1185">Reference proteome</keyword>
<organism>
    <name type="scientific">Danio rerio</name>
    <name type="common">Zebrafish</name>
    <name type="synonym">Brachydanio rerio</name>
    <dbReference type="NCBI Taxonomy" id="7955"/>
    <lineage>
        <taxon>Eukaryota</taxon>
        <taxon>Metazoa</taxon>
        <taxon>Chordata</taxon>
        <taxon>Craniata</taxon>
        <taxon>Vertebrata</taxon>
        <taxon>Euteleostomi</taxon>
        <taxon>Actinopterygii</taxon>
        <taxon>Neopterygii</taxon>
        <taxon>Teleostei</taxon>
        <taxon>Ostariophysi</taxon>
        <taxon>Cypriniformes</taxon>
        <taxon>Danionidae</taxon>
        <taxon>Danioninae</taxon>
        <taxon>Danio</taxon>
    </lineage>
</organism>
<feature type="chain" id="PRO_0000355972" description="Protein mab-21-like 3">
    <location>
        <begin position="1"/>
        <end position="387"/>
    </location>
</feature>
<protein>
    <recommendedName>
        <fullName>Protein mab-21-like 3</fullName>
    </recommendedName>
</protein>
<gene>
    <name type="primary">mab21L3</name>
    <name type="ORF">si:ch211-246m4.3</name>
</gene>